<evidence type="ECO:0000255" key="1">
    <source>
        <dbReference type="HAMAP-Rule" id="MF_03015"/>
    </source>
</evidence>
<evidence type="ECO:0000256" key="2">
    <source>
        <dbReference type="SAM" id="MobiDB-lite"/>
    </source>
</evidence>
<evidence type="ECO:0000305" key="3"/>
<keyword id="KW-0963">Cytoplasm</keyword>
<keyword id="KW-0687">Ribonucleoprotein</keyword>
<keyword id="KW-0689">Ribosomal protein</keyword>
<proteinExistence type="evidence at transcript level"/>
<accession>P38980</accession>
<organism>
    <name type="scientific">Tripneustes gratilla</name>
    <name type="common">Hawaian sea urchin</name>
    <name type="synonym">Echinus gratilla</name>
    <dbReference type="NCBI Taxonomy" id="7673"/>
    <lineage>
        <taxon>Eukaryota</taxon>
        <taxon>Metazoa</taxon>
        <taxon>Echinodermata</taxon>
        <taxon>Eleutherozoa</taxon>
        <taxon>Echinozoa</taxon>
        <taxon>Echinoidea</taxon>
        <taxon>Euechinoidea</taxon>
        <taxon>Echinacea</taxon>
        <taxon>Temnopleuroida</taxon>
        <taxon>Toxopneustidae</taxon>
        <taxon>Tripneustes</taxon>
    </lineage>
</organism>
<name>RSSA_TRIGR</name>
<comment type="function">
    <text evidence="1">Required for the assembly and/or stability of the 40S ribosomal subunit. Required for the processing of the 20S rRNA-precursor to mature 18S rRNA in a late step of the maturation of 40S ribosomal subunits.</text>
</comment>
<comment type="subunit">
    <text evidence="1">Component of the small ribosomal subunit. Mature ribosomes consist of a small (40S) and a large (60S) subunit. The 40S subunit contains about 33 different proteins and 1 molecule of RNA (18S). The 60S subunit contains about 49 different proteins and 3 molecules of RNA (28S, 5.8S and 5S). Interacts with ribosomal protein S21.</text>
</comment>
<comment type="subcellular location">
    <subcellularLocation>
        <location>Cytoplasm</location>
    </subcellularLocation>
</comment>
<comment type="similarity">
    <text evidence="1">Belongs to the universal ribosomal protein uS2 family.</text>
</comment>
<protein>
    <recommendedName>
        <fullName evidence="1">Small ribosomal subunit protein uS2</fullName>
    </recommendedName>
    <alternativeName>
        <fullName evidence="3">40S ribosomal protein SA</fullName>
    </alternativeName>
</protein>
<sequence>MSGGLDCLALKEDDVQKFLASGAHIGSSNLDYQMTQYVYKRKPDGTYIINLRRTWEKLLMAARIIVAIENPADVCVISSRPYGQRAVLKFGAHTGATPIAGRYTPGTFTNQIQAAFREPRILIVTDPRSDHQPVTEASYVNIPVIALCNTDSPLRYVDIAIPCNNKSIHSIGLMWWMLSREVLRLRGAISRDVTWEIMCDLYFFRDPEEAEKEEQEARDRATAVKEEPAQPYAEQWSDPVAVPPAGQPVAEVTDWAADSVKAPVAGIGTYGGPSEDWAVADAPAAPAAPTPAAPSQEFTATDDWGGAASNDWAISS</sequence>
<reference key="1">
    <citation type="journal article" date="1995" name="J. Cell Sci.">
        <title>A protein similar to the 67 kDa laminin binding protein and p40 is probably a component of the translational machinery in Urechis caupo oocytes and embryos.</title>
        <authorList>
            <person name="Rosenthal E.T."/>
            <person name="Wordeman L."/>
        </authorList>
    </citation>
    <scope>NUCLEOTIDE SEQUENCE [MRNA]</scope>
</reference>
<feature type="chain" id="PRO_0000134363" description="Small ribosomal subunit protein uS2">
    <location>
        <begin position="1"/>
        <end position="316"/>
    </location>
</feature>
<feature type="region of interest" description="Disordered" evidence="2">
    <location>
        <begin position="209"/>
        <end position="240"/>
    </location>
</feature>
<feature type="region of interest" description="Disordered" evidence="2">
    <location>
        <begin position="283"/>
        <end position="316"/>
    </location>
</feature>
<feature type="compositionally biased region" description="Basic and acidic residues" evidence="2">
    <location>
        <begin position="215"/>
        <end position="228"/>
    </location>
</feature>
<dbReference type="EMBL" id="U02371">
    <property type="protein sequence ID" value="AAA90977.1"/>
    <property type="molecule type" value="mRNA"/>
</dbReference>
<dbReference type="SMR" id="P38980"/>
<dbReference type="GO" id="GO:0022627">
    <property type="term" value="C:cytosolic small ribosomal subunit"/>
    <property type="evidence" value="ECO:0007669"/>
    <property type="project" value="UniProtKB-UniRule"/>
</dbReference>
<dbReference type="GO" id="GO:0003735">
    <property type="term" value="F:structural constituent of ribosome"/>
    <property type="evidence" value="ECO:0007669"/>
    <property type="project" value="UniProtKB-UniRule"/>
</dbReference>
<dbReference type="GO" id="GO:0000028">
    <property type="term" value="P:ribosomal small subunit assembly"/>
    <property type="evidence" value="ECO:0007669"/>
    <property type="project" value="UniProtKB-UniRule"/>
</dbReference>
<dbReference type="GO" id="GO:0006412">
    <property type="term" value="P:translation"/>
    <property type="evidence" value="ECO:0007669"/>
    <property type="project" value="UniProtKB-UniRule"/>
</dbReference>
<dbReference type="CDD" id="cd01425">
    <property type="entry name" value="RPS2"/>
    <property type="match status" value="1"/>
</dbReference>
<dbReference type="FunFam" id="3.40.50.10490:FF:000012">
    <property type="entry name" value="40S ribosomal protein SA"/>
    <property type="match status" value="1"/>
</dbReference>
<dbReference type="Gene3D" id="3.40.50.10490">
    <property type="entry name" value="Glucose-6-phosphate isomerase like protein, domain 1"/>
    <property type="match status" value="1"/>
</dbReference>
<dbReference type="HAMAP" id="MF_03015">
    <property type="entry name" value="Ribosomal_S2_euk"/>
    <property type="match status" value="1"/>
</dbReference>
<dbReference type="InterPro" id="IPR001865">
    <property type="entry name" value="Ribosomal_uS2"/>
</dbReference>
<dbReference type="InterPro" id="IPR032281">
    <property type="entry name" value="Ribosomal_uS2_C"/>
</dbReference>
<dbReference type="InterPro" id="IPR018130">
    <property type="entry name" value="Ribosomal_uS2_CS"/>
</dbReference>
<dbReference type="InterPro" id="IPR027498">
    <property type="entry name" value="Ribosomal_uS2_euk"/>
</dbReference>
<dbReference type="InterPro" id="IPR005707">
    <property type="entry name" value="Ribosomal_uS2_euk/arc"/>
</dbReference>
<dbReference type="InterPro" id="IPR023591">
    <property type="entry name" value="Ribosomal_uS2_flav_dom_sf"/>
</dbReference>
<dbReference type="NCBIfam" id="TIGR01012">
    <property type="entry name" value="uS2_euk_arch"/>
    <property type="match status" value="1"/>
</dbReference>
<dbReference type="PANTHER" id="PTHR11489">
    <property type="entry name" value="40S RIBOSOMAL PROTEIN SA"/>
    <property type="match status" value="1"/>
</dbReference>
<dbReference type="Pfam" id="PF16122">
    <property type="entry name" value="40S_SA_C"/>
    <property type="match status" value="1"/>
</dbReference>
<dbReference type="Pfam" id="PF00318">
    <property type="entry name" value="Ribosomal_S2"/>
    <property type="match status" value="2"/>
</dbReference>
<dbReference type="PRINTS" id="PR00395">
    <property type="entry name" value="RIBOSOMALS2"/>
</dbReference>
<dbReference type="SUPFAM" id="SSF52313">
    <property type="entry name" value="Ribosomal protein S2"/>
    <property type="match status" value="1"/>
</dbReference>
<dbReference type="PROSITE" id="PS00962">
    <property type="entry name" value="RIBOSOMAL_S2_1"/>
    <property type="match status" value="1"/>
</dbReference>
<dbReference type="PROSITE" id="PS00963">
    <property type="entry name" value="RIBOSOMAL_S2_2"/>
    <property type="match status" value="1"/>
</dbReference>